<keyword id="KW-0963">Cytoplasm</keyword>
<keyword id="KW-0235">DNA replication</keyword>
<keyword id="KW-0238">DNA-binding</keyword>
<keyword id="KW-0239">DNA-directed DNA polymerase</keyword>
<keyword id="KW-0548">Nucleotidyltransferase</keyword>
<keyword id="KW-1185">Reference proteome</keyword>
<keyword id="KW-0808">Transferase</keyword>
<organism>
    <name type="scientific">Haemophilus influenzae (strain ATCC 51907 / DSM 11121 / KW20 / Rd)</name>
    <dbReference type="NCBI Taxonomy" id="71421"/>
    <lineage>
        <taxon>Bacteria</taxon>
        <taxon>Pseudomonadati</taxon>
        <taxon>Pseudomonadota</taxon>
        <taxon>Gammaproteobacteria</taxon>
        <taxon>Pasteurellales</taxon>
        <taxon>Pasteurellaceae</taxon>
        <taxon>Haemophilus</taxon>
    </lineage>
</organism>
<sequence length="366" mass="41631">MQFSISRENLLKPLQQVCGVLSNRPNIPVLNNVLLQIEDYRLTITGTDLEVELSSQTQLSSSSENGTFTIPAKKFLDICRTLSDDSEITVTFEQDRALVQSGRSRFTLATQPAEEYPNLTDWQSEVDFELPQNTLRRLIEATQFSMANQDARYFLNGMKFETEGNLLRTVATDGHRLAVCTISLEQELQNHSVILPRKGVLELVRLLETNDEPARLQIGTNNLRVHLKNTVFTSKLIDGRFPDYRRVLPRNATKIVEGNWEMLKQAFARASILSNERARSVRLSLKENQLKITASNTEHEEAEEIVDVNYNGEELEVGFNVTYILDVLNALKCNQVRMCLTDAFSSCLIENCEDSSCEYVIMPMRL</sequence>
<name>DPO3B_HAEIN</name>
<feature type="chain" id="PRO_0000105437" description="Beta sliding clamp">
    <location>
        <begin position="1"/>
        <end position="366"/>
    </location>
</feature>
<proteinExistence type="inferred from homology"/>
<accession>P43744</accession>
<gene>
    <name type="primary">dnaN</name>
    <name type="ordered locus">HI_0992</name>
</gene>
<reference key="1">
    <citation type="journal article" date="1995" name="Science">
        <title>Whole-genome random sequencing and assembly of Haemophilus influenzae Rd.</title>
        <authorList>
            <person name="Fleischmann R.D."/>
            <person name="Adams M.D."/>
            <person name="White O."/>
            <person name="Clayton R.A."/>
            <person name="Kirkness E.F."/>
            <person name="Kerlavage A.R."/>
            <person name="Bult C.J."/>
            <person name="Tomb J.-F."/>
            <person name="Dougherty B.A."/>
            <person name="Merrick J.M."/>
            <person name="McKenney K."/>
            <person name="Sutton G.G."/>
            <person name="FitzHugh W."/>
            <person name="Fields C.A."/>
            <person name="Gocayne J.D."/>
            <person name="Scott J.D."/>
            <person name="Shirley R."/>
            <person name="Liu L.-I."/>
            <person name="Glodek A."/>
            <person name="Kelley J.M."/>
            <person name="Weidman J.F."/>
            <person name="Phillips C.A."/>
            <person name="Spriggs T."/>
            <person name="Hedblom E."/>
            <person name="Cotton M.D."/>
            <person name="Utterback T.R."/>
            <person name="Hanna M.C."/>
            <person name="Nguyen D.T."/>
            <person name="Saudek D.M."/>
            <person name="Brandon R.C."/>
            <person name="Fine L.D."/>
            <person name="Fritchman J.L."/>
            <person name="Fuhrmann J.L."/>
            <person name="Geoghagen N.S.M."/>
            <person name="Gnehm C.L."/>
            <person name="McDonald L.A."/>
            <person name="Small K.V."/>
            <person name="Fraser C.M."/>
            <person name="Smith H.O."/>
            <person name="Venter J.C."/>
        </authorList>
    </citation>
    <scope>NUCLEOTIDE SEQUENCE [LARGE SCALE GENOMIC DNA]</scope>
    <source>
        <strain>ATCC 51907 / DSM 11121 / KW20 / Rd</strain>
    </source>
</reference>
<dbReference type="EMBL" id="L42023">
    <property type="protein sequence ID" value="AAC22654.1"/>
    <property type="molecule type" value="Genomic_DNA"/>
</dbReference>
<dbReference type="PIR" id="A64107">
    <property type="entry name" value="A64107"/>
</dbReference>
<dbReference type="RefSeq" id="NP_439155.1">
    <property type="nucleotide sequence ID" value="NC_000907.1"/>
</dbReference>
<dbReference type="SMR" id="P43744"/>
<dbReference type="STRING" id="71421.HI_0992"/>
<dbReference type="EnsemblBacteria" id="AAC22654">
    <property type="protein sequence ID" value="AAC22654"/>
    <property type="gene ID" value="HI_0992"/>
</dbReference>
<dbReference type="KEGG" id="hin:HI_0992"/>
<dbReference type="PATRIC" id="fig|71421.8.peg.1035"/>
<dbReference type="eggNOG" id="COG0592">
    <property type="taxonomic scope" value="Bacteria"/>
</dbReference>
<dbReference type="HOGENOM" id="CLU_038149_4_2_6"/>
<dbReference type="OrthoDB" id="8421503at2"/>
<dbReference type="PhylomeDB" id="P43744"/>
<dbReference type="BioCyc" id="HINF71421:G1GJ1-1034-MONOMER"/>
<dbReference type="Proteomes" id="UP000000579">
    <property type="component" value="Chromosome"/>
</dbReference>
<dbReference type="GO" id="GO:0005737">
    <property type="term" value="C:cytoplasm"/>
    <property type="evidence" value="ECO:0007669"/>
    <property type="project" value="UniProtKB-SubCell"/>
</dbReference>
<dbReference type="GO" id="GO:0009360">
    <property type="term" value="C:DNA polymerase III complex"/>
    <property type="evidence" value="ECO:0007669"/>
    <property type="project" value="InterPro"/>
</dbReference>
<dbReference type="GO" id="GO:0008408">
    <property type="term" value="F:3'-5' exonuclease activity"/>
    <property type="evidence" value="ECO:0007669"/>
    <property type="project" value="InterPro"/>
</dbReference>
<dbReference type="GO" id="GO:0003677">
    <property type="term" value="F:DNA binding"/>
    <property type="evidence" value="ECO:0007669"/>
    <property type="project" value="UniProtKB-KW"/>
</dbReference>
<dbReference type="GO" id="GO:0003887">
    <property type="term" value="F:DNA-directed DNA polymerase activity"/>
    <property type="evidence" value="ECO:0007669"/>
    <property type="project" value="UniProtKB-KW"/>
</dbReference>
<dbReference type="GO" id="GO:0006271">
    <property type="term" value="P:DNA strand elongation involved in DNA replication"/>
    <property type="evidence" value="ECO:0000318"/>
    <property type="project" value="GO_Central"/>
</dbReference>
<dbReference type="CDD" id="cd00140">
    <property type="entry name" value="beta_clamp"/>
    <property type="match status" value="1"/>
</dbReference>
<dbReference type="FunFam" id="3.10.150.10:FF:000007">
    <property type="entry name" value="Beta sliding clamp"/>
    <property type="match status" value="1"/>
</dbReference>
<dbReference type="Gene3D" id="3.70.10.10">
    <property type="match status" value="1"/>
</dbReference>
<dbReference type="Gene3D" id="3.10.150.10">
    <property type="entry name" value="DNA Polymerase III, subunit A, domain 2"/>
    <property type="match status" value="1"/>
</dbReference>
<dbReference type="InterPro" id="IPR046938">
    <property type="entry name" value="DNA_clamp_sf"/>
</dbReference>
<dbReference type="InterPro" id="IPR001001">
    <property type="entry name" value="DNA_polIII_beta"/>
</dbReference>
<dbReference type="InterPro" id="IPR022635">
    <property type="entry name" value="DNA_polIII_beta_C"/>
</dbReference>
<dbReference type="InterPro" id="IPR022637">
    <property type="entry name" value="DNA_polIII_beta_cen"/>
</dbReference>
<dbReference type="InterPro" id="IPR022634">
    <property type="entry name" value="DNA_polIII_beta_N"/>
</dbReference>
<dbReference type="NCBIfam" id="TIGR00663">
    <property type="entry name" value="dnan"/>
    <property type="match status" value="1"/>
</dbReference>
<dbReference type="PANTHER" id="PTHR30478:SF0">
    <property type="entry name" value="BETA SLIDING CLAMP"/>
    <property type="match status" value="1"/>
</dbReference>
<dbReference type="PANTHER" id="PTHR30478">
    <property type="entry name" value="DNA POLYMERASE III SUBUNIT BETA"/>
    <property type="match status" value="1"/>
</dbReference>
<dbReference type="Pfam" id="PF00712">
    <property type="entry name" value="DNA_pol3_beta"/>
    <property type="match status" value="1"/>
</dbReference>
<dbReference type="Pfam" id="PF02767">
    <property type="entry name" value="DNA_pol3_beta_2"/>
    <property type="match status" value="1"/>
</dbReference>
<dbReference type="Pfam" id="PF02768">
    <property type="entry name" value="DNA_pol3_beta_3"/>
    <property type="match status" value="1"/>
</dbReference>
<dbReference type="PIRSF" id="PIRSF000804">
    <property type="entry name" value="DNA_pol_III_b"/>
    <property type="match status" value="1"/>
</dbReference>
<dbReference type="SMART" id="SM00480">
    <property type="entry name" value="POL3Bc"/>
    <property type="match status" value="1"/>
</dbReference>
<dbReference type="SUPFAM" id="SSF55979">
    <property type="entry name" value="DNA clamp"/>
    <property type="match status" value="3"/>
</dbReference>
<protein>
    <recommendedName>
        <fullName>Beta sliding clamp</fullName>
        <shortName>Beta clamp</shortName>
        <shortName>Sliding clamp</shortName>
    </recommendedName>
    <alternativeName>
        <fullName>Beta-clamp processivity factor</fullName>
    </alternativeName>
    <alternativeName>
        <fullName>DNA polymerase III beta sliding clamp subunit</fullName>
    </alternativeName>
    <alternativeName>
        <fullName>DNA polymerase III subunit beta</fullName>
    </alternativeName>
</protein>
<comment type="function">
    <text evidence="1">Confers DNA tethering and processivity to DNA polymerases and other proteins. Acts as a clamp, forming a ring around DNA (a reaction catalyzed by the clamp-loading complex) which diffuses in an ATP-independent manner freely and bidirectionally along dsDNA. Initially characterized for its ability to contact the catalytic subunit of DNA polymerase III (Pol III), a complex, multichain enzyme responsible for most of the replicative synthesis in bacteria; Pol III exhibits 3'-5' exonuclease proofreading activity. The beta chain is required for initiation of replication as well as for processivity of DNA replication.</text>
</comment>
<comment type="subunit">
    <text evidence="1">Forms a ring-shaped head-to-tail homodimer around DNA which binds and tethers DNA polymerases and other proteins to the DNA. The DNA replisome complex has a single clamp-loading complex (3 tau and 1 each of delta, delta', psi and chi subunits) which binds 3 Pol III cores (1 core on the leading strand and 2 on the lagging strand) each with a beta sliding clamp dimer. Additional proteins in the replisome are other copies of gamma, psi and chi, Ssb, DNA helicase and RNA primase.</text>
</comment>
<comment type="subcellular location">
    <subcellularLocation>
        <location evidence="1">Cytoplasm</location>
    </subcellularLocation>
</comment>
<comment type="similarity">
    <text evidence="2">Belongs to the beta sliding clamp family.</text>
</comment>
<evidence type="ECO:0000250" key="1">
    <source>
        <dbReference type="UniProtKB" id="P0A988"/>
    </source>
</evidence>
<evidence type="ECO:0000305" key="2"/>